<name>TSTD2_PONAB</name>
<protein>
    <recommendedName>
        <fullName>Thiosulfate sulfurtransferase/rhodanese-like domain-containing protein 2</fullName>
    </recommendedName>
</protein>
<evidence type="ECO:0000250" key="1">
    <source>
        <dbReference type="UniProtKB" id="Q5T7W7"/>
    </source>
</evidence>
<evidence type="ECO:0000255" key="2">
    <source>
        <dbReference type="PROSITE-ProRule" id="PRU00173"/>
    </source>
</evidence>
<evidence type="ECO:0000256" key="3">
    <source>
        <dbReference type="SAM" id="MobiDB-lite"/>
    </source>
</evidence>
<feature type="chain" id="PRO_0000230675" description="Thiosulfate sulfurtransferase/rhodanese-like domain-containing protein 2">
    <location>
        <begin position="1"/>
        <end position="516"/>
    </location>
</feature>
<feature type="domain" description="Rhodanese" evidence="2">
    <location>
        <begin position="301"/>
        <end position="396"/>
    </location>
</feature>
<feature type="region of interest" description="Disordered" evidence="3">
    <location>
        <begin position="490"/>
        <end position="516"/>
    </location>
</feature>
<feature type="compositionally biased region" description="Acidic residues" evidence="3">
    <location>
        <begin position="506"/>
        <end position="516"/>
    </location>
</feature>
<feature type="active site" description="Cysteine persulfide intermediate" evidence="2">
    <location>
        <position position="355"/>
    </location>
</feature>
<feature type="modified residue" description="Phosphoserine" evidence="1">
    <location>
        <position position="269"/>
    </location>
</feature>
<reference key="1">
    <citation type="submission" date="2004-11" db="EMBL/GenBank/DDBJ databases">
        <authorList>
            <consortium name="The German cDNA consortium"/>
        </authorList>
    </citation>
    <scope>NUCLEOTIDE SEQUENCE [LARGE SCALE MRNA]</scope>
    <source>
        <tissue>Brain cortex</tissue>
    </source>
</reference>
<gene>
    <name type="primary">TSTD2</name>
</gene>
<sequence length="516" mass="58195">MPSSTSPDQGDDLETCILRFSDLDLKDMSLINPSSSLKAELDGSTKKKYSFAKKKAFALFVKTKEVPTKRSFECKEKLWKCCQQLFTDQTSIHRHVATQHADEIYHQTASILKQLAVTLSTSKSLSSADEKNPLKECLPHSHDVSAWLPDISCFNPDELISGQGSEEGEVLLYYCYRDLEDPQWICAWQTALCQQLHLTGKIRIAAEGINGTVGGSKLATRLYVEVMLSFPLFKDDLCKDDFKTSKGGAHCFPELRVGVFEEIVPMGISPKKISYKKPGIHLSPGEFHKEVEKFLSQANQEQSDTILLDCRNFYESKIGRFQGCLAPDIRKFSYFPSYVDKNLELFREKRVLMYCTGGIRCERGSAYLKAKGVCKEVFQLKGGIHKYLEEFPDGFYKGKLFVFDERYALSYNSDVVSECSYCGARWDQYKLCSTPQCHQLVLTCPACQGQGFTACCVTCQDKGSRKVSGPMQDSFKEECECTARRPRIPRELLQHVRQPVSPEPGPDAEEDGPVLV</sequence>
<proteinExistence type="evidence at transcript level"/>
<dbReference type="EMBL" id="CR858229">
    <property type="protein sequence ID" value="CAH90466.1"/>
    <property type="molecule type" value="mRNA"/>
</dbReference>
<dbReference type="RefSeq" id="NP_001125241.1">
    <property type="nucleotide sequence ID" value="NM_001131769.1"/>
</dbReference>
<dbReference type="RefSeq" id="XP_009242951.1">
    <property type="nucleotide sequence ID" value="XM_009244676.1"/>
</dbReference>
<dbReference type="RefSeq" id="XP_024107483.3">
    <property type="nucleotide sequence ID" value="XM_024251715.3"/>
</dbReference>
<dbReference type="SMR" id="Q5RCP1"/>
<dbReference type="FunCoup" id="Q5RCP1">
    <property type="interactions" value="249"/>
</dbReference>
<dbReference type="Ensembl" id="ENSPPYT00000022657.2">
    <property type="protein sequence ID" value="ENSPPYP00000021767.2"/>
    <property type="gene ID" value="ENSPPYG00000019425.3"/>
</dbReference>
<dbReference type="GeneID" id="100172136"/>
<dbReference type="KEGG" id="pon:100172136"/>
<dbReference type="CTD" id="158427"/>
<dbReference type="eggNOG" id="ENOG502QSQK">
    <property type="taxonomic scope" value="Eukaryota"/>
</dbReference>
<dbReference type="GeneTree" id="ENSGT00390000016307"/>
<dbReference type="InParanoid" id="Q5RCP1"/>
<dbReference type="OMA" id="ECKEKLW"/>
<dbReference type="OrthoDB" id="25002at2759"/>
<dbReference type="Proteomes" id="UP000001595">
    <property type="component" value="Chromosome 9"/>
</dbReference>
<dbReference type="CDD" id="cd01518">
    <property type="entry name" value="RHOD_YceA"/>
    <property type="match status" value="1"/>
</dbReference>
<dbReference type="FunFam" id="3.40.250.10:FF:000022">
    <property type="entry name" value="Thiosulfate sulfurtransferase/rhodanese-like domain-containing protein 2"/>
    <property type="match status" value="1"/>
</dbReference>
<dbReference type="Gene3D" id="3.30.70.100">
    <property type="match status" value="1"/>
</dbReference>
<dbReference type="Gene3D" id="3.40.250.10">
    <property type="entry name" value="Rhodanese-like domain"/>
    <property type="match status" value="1"/>
</dbReference>
<dbReference type="InterPro" id="IPR001763">
    <property type="entry name" value="Rhodanese-like_dom"/>
</dbReference>
<dbReference type="InterPro" id="IPR036873">
    <property type="entry name" value="Rhodanese-like_dom_sf"/>
</dbReference>
<dbReference type="InterPro" id="IPR022111">
    <property type="entry name" value="Rhodanese_C"/>
</dbReference>
<dbReference type="InterPro" id="IPR020936">
    <property type="entry name" value="TrhO"/>
</dbReference>
<dbReference type="InterPro" id="IPR040503">
    <property type="entry name" value="TRHO_N"/>
</dbReference>
<dbReference type="PANTHER" id="PTHR43268">
    <property type="entry name" value="THIOSULFATE SULFURTRANSFERASE/RHODANESE-LIKE DOMAIN-CONTAINING PROTEIN 2"/>
    <property type="match status" value="1"/>
</dbReference>
<dbReference type="PANTHER" id="PTHR43268:SF6">
    <property type="entry name" value="THIOSULFATE SULFURTRANSFERASE_RHODANESE-LIKE DOMAIN-CONTAINING PROTEIN 2"/>
    <property type="match status" value="1"/>
</dbReference>
<dbReference type="Pfam" id="PF00581">
    <property type="entry name" value="Rhodanese"/>
    <property type="match status" value="1"/>
</dbReference>
<dbReference type="Pfam" id="PF12368">
    <property type="entry name" value="Rhodanese_C"/>
    <property type="match status" value="1"/>
</dbReference>
<dbReference type="Pfam" id="PF23949">
    <property type="entry name" value="TSTD2_N"/>
    <property type="match status" value="1"/>
</dbReference>
<dbReference type="Pfam" id="PF17773">
    <property type="entry name" value="UPF0176_N"/>
    <property type="match status" value="1"/>
</dbReference>
<dbReference type="SMART" id="SM00450">
    <property type="entry name" value="RHOD"/>
    <property type="match status" value="1"/>
</dbReference>
<dbReference type="SUPFAM" id="SSF52821">
    <property type="entry name" value="Rhodanese/Cell cycle control phosphatase"/>
    <property type="match status" value="1"/>
</dbReference>
<dbReference type="PROSITE" id="PS50206">
    <property type="entry name" value="RHODANESE_3"/>
    <property type="match status" value="1"/>
</dbReference>
<organism>
    <name type="scientific">Pongo abelii</name>
    <name type="common">Sumatran orangutan</name>
    <name type="synonym">Pongo pygmaeus abelii</name>
    <dbReference type="NCBI Taxonomy" id="9601"/>
    <lineage>
        <taxon>Eukaryota</taxon>
        <taxon>Metazoa</taxon>
        <taxon>Chordata</taxon>
        <taxon>Craniata</taxon>
        <taxon>Vertebrata</taxon>
        <taxon>Euteleostomi</taxon>
        <taxon>Mammalia</taxon>
        <taxon>Eutheria</taxon>
        <taxon>Euarchontoglires</taxon>
        <taxon>Primates</taxon>
        <taxon>Haplorrhini</taxon>
        <taxon>Catarrhini</taxon>
        <taxon>Hominidae</taxon>
        <taxon>Pongo</taxon>
    </lineage>
</organism>
<accession>Q5RCP1</accession>
<keyword id="KW-0597">Phosphoprotein</keyword>
<keyword id="KW-1185">Reference proteome</keyword>